<dbReference type="EC" id="6.3.2.9" evidence="1"/>
<dbReference type="EMBL" id="BA000035">
    <property type="protein sequence ID" value="BAC18865.1"/>
    <property type="molecule type" value="Genomic_DNA"/>
</dbReference>
<dbReference type="RefSeq" id="WP_006768055.1">
    <property type="nucleotide sequence ID" value="NC_004369.1"/>
</dbReference>
<dbReference type="SMR" id="Q8FNT8"/>
<dbReference type="STRING" id="196164.gene:10742483"/>
<dbReference type="KEGG" id="cef:CE2055"/>
<dbReference type="eggNOG" id="COG0771">
    <property type="taxonomic scope" value="Bacteria"/>
</dbReference>
<dbReference type="HOGENOM" id="CLU_032540_0_0_11"/>
<dbReference type="OrthoDB" id="9809796at2"/>
<dbReference type="UniPathway" id="UPA00219"/>
<dbReference type="Proteomes" id="UP000001409">
    <property type="component" value="Chromosome"/>
</dbReference>
<dbReference type="GO" id="GO:0005737">
    <property type="term" value="C:cytoplasm"/>
    <property type="evidence" value="ECO:0007669"/>
    <property type="project" value="UniProtKB-SubCell"/>
</dbReference>
<dbReference type="GO" id="GO:0005524">
    <property type="term" value="F:ATP binding"/>
    <property type="evidence" value="ECO:0007669"/>
    <property type="project" value="UniProtKB-UniRule"/>
</dbReference>
<dbReference type="GO" id="GO:0008764">
    <property type="term" value="F:UDP-N-acetylmuramoylalanine-D-glutamate ligase activity"/>
    <property type="evidence" value="ECO:0007669"/>
    <property type="project" value="UniProtKB-UniRule"/>
</dbReference>
<dbReference type="GO" id="GO:0051301">
    <property type="term" value="P:cell division"/>
    <property type="evidence" value="ECO:0007669"/>
    <property type="project" value="UniProtKB-KW"/>
</dbReference>
<dbReference type="GO" id="GO:0071555">
    <property type="term" value="P:cell wall organization"/>
    <property type="evidence" value="ECO:0007669"/>
    <property type="project" value="UniProtKB-KW"/>
</dbReference>
<dbReference type="GO" id="GO:0009252">
    <property type="term" value="P:peptidoglycan biosynthetic process"/>
    <property type="evidence" value="ECO:0007669"/>
    <property type="project" value="UniProtKB-UniRule"/>
</dbReference>
<dbReference type="GO" id="GO:0008360">
    <property type="term" value="P:regulation of cell shape"/>
    <property type="evidence" value="ECO:0007669"/>
    <property type="project" value="UniProtKB-KW"/>
</dbReference>
<dbReference type="Gene3D" id="3.90.190.20">
    <property type="entry name" value="Mur ligase, C-terminal domain"/>
    <property type="match status" value="1"/>
</dbReference>
<dbReference type="Gene3D" id="3.40.1190.10">
    <property type="entry name" value="Mur-like, catalytic domain"/>
    <property type="match status" value="1"/>
</dbReference>
<dbReference type="Gene3D" id="3.40.50.720">
    <property type="entry name" value="NAD(P)-binding Rossmann-like Domain"/>
    <property type="match status" value="1"/>
</dbReference>
<dbReference type="HAMAP" id="MF_00639">
    <property type="entry name" value="MurD"/>
    <property type="match status" value="1"/>
</dbReference>
<dbReference type="InterPro" id="IPR036565">
    <property type="entry name" value="Mur-like_cat_sf"/>
</dbReference>
<dbReference type="InterPro" id="IPR004101">
    <property type="entry name" value="Mur_ligase_C"/>
</dbReference>
<dbReference type="InterPro" id="IPR036615">
    <property type="entry name" value="Mur_ligase_C_dom_sf"/>
</dbReference>
<dbReference type="InterPro" id="IPR013221">
    <property type="entry name" value="Mur_ligase_cen"/>
</dbReference>
<dbReference type="InterPro" id="IPR005762">
    <property type="entry name" value="MurD"/>
</dbReference>
<dbReference type="NCBIfam" id="TIGR01087">
    <property type="entry name" value="murD"/>
    <property type="match status" value="1"/>
</dbReference>
<dbReference type="PANTHER" id="PTHR43692">
    <property type="entry name" value="UDP-N-ACETYLMURAMOYLALANINE--D-GLUTAMATE LIGASE"/>
    <property type="match status" value="1"/>
</dbReference>
<dbReference type="PANTHER" id="PTHR43692:SF1">
    <property type="entry name" value="UDP-N-ACETYLMURAMOYLALANINE--D-GLUTAMATE LIGASE"/>
    <property type="match status" value="1"/>
</dbReference>
<dbReference type="Pfam" id="PF02875">
    <property type="entry name" value="Mur_ligase_C"/>
    <property type="match status" value="1"/>
</dbReference>
<dbReference type="Pfam" id="PF08245">
    <property type="entry name" value="Mur_ligase_M"/>
    <property type="match status" value="1"/>
</dbReference>
<dbReference type="Pfam" id="PF21799">
    <property type="entry name" value="MurD-like_N"/>
    <property type="match status" value="1"/>
</dbReference>
<dbReference type="SUPFAM" id="SSF51984">
    <property type="entry name" value="MurCD N-terminal domain"/>
    <property type="match status" value="1"/>
</dbReference>
<dbReference type="SUPFAM" id="SSF53623">
    <property type="entry name" value="MurD-like peptide ligases, catalytic domain"/>
    <property type="match status" value="1"/>
</dbReference>
<dbReference type="SUPFAM" id="SSF53244">
    <property type="entry name" value="MurD-like peptide ligases, peptide-binding domain"/>
    <property type="match status" value="1"/>
</dbReference>
<name>MURD_COREF</name>
<keyword id="KW-0067">ATP-binding</keyword>
<keyword id="KW-0131">Cell cycle</keyword>
<keyword id="KW-0132">Cell division</keyword>
<keyword id="KW-0133">Cell shape</keyword>
<keyword id="KW-0961">Cell wall biogenesis/degradation</keyword>
<keyword id="KW-0963">Cytoplasm</keyword>
<keyword id="KW-0436">Ligase</keyword>
<keyword id="KW-0547">Nucleotide-binding</keyword>
<keyword id="KW-0573">Peptidoglycan synthesis</keyword>
<keyword id="KW-1185">Reference proteome</keyword>
<evidence type="ECO:0000255" key="1">
    <source>
        <dbReference type="HAMAP-Rule" id="MF_00639"/>
    </source>
</evidence>
<organism>
    <name type="scientific">Corynebacterium efficiens (strain DSM 44549 / YS-314 / AJ 12310 / JCM 11189 / NBRC 100395)</name>
    <dbReference type="NCBI Taxonomy" id="196164"/>
    <lineage>
        <taxon>Bacteria</taxon>
        <taxon>Bacillati</taxon>
        <taxon>Actinomycetota</taxon>
        <taxon>Actinomycetes</taxon>
        <taxon>Mycobacteriales</taxon>
        <taxon>Corynebacteriaceae</taxon>
        <taxon>Corynebacterium</taxon>
    </lineage>
</organism>
<comment type="function">
    <text evidence="1">Cell wall formation. Catalyzes the addition of glutamate to the nucleotide precursor UDP-N-acetylmuramoyl-L-alanine (UMA).</text>
</comment>
<comment type="catalytic activity">
    <reaction evidence="1">
        <text>UDP-N-acetyl-alpha-D-muramoyl-L-alanine + D-glutamate + ATP = UDP-N-acetyl-alpha-D-muramoyl-L-alanyl-D-glutamate + ADP + phosphate + H(+)</text>
        <dbReference type="Rhea" id="RHEA:16429"/>
        <dbReference type="ChEBI" id="CHEBI:15378"/>
        <dbReference type="ChEBI" id="CHEBI:29986"/>
        <dbReference type="ChEBI" id="CHEBI:30616"/>
        <dbReference type="ChEBI" id="CHEBI:43474"/>
        <dbReference type="ChEBI" id="CHEBI:83898"/>
        <dbReference type="ChEBI" id="CHEBI:83900"/>
        <dbReference type="ChEBI" id="CHEBI:456216"/>
        <dbReference type="EC" id="6.3.2.9"/>
    </reaction>
</comment>
<comment type="pathway">
    <text evidence="1">Cell wall biogenesis; peptidoglycan biosynthesis.</text>
</comment>
<comment type="subcellular location">
    <subcellularLocation>
        <location evidence="1">Cytoplasm</location>
    </subcellularLocation>
</comment>
<comment type="similarity">
    <text evidence="1">Belongs to the MurCDEF family.</text>
</comment>
<feature type="chain" id="PRO_0000109004" description="UDP-N-acetylmuramoylalanine--D-glutamate ligase">
    <location>
        <begin position="1"/>
        <end position="475"/>
    </location>
</feature>
<feature type="binding site" evidence="1">
    <location>
        <begin position="130"/>
        <end position="136"/>
    </location>
    <ligand>
        <name>ATP</name>
        <dbReference type="ChEBI" id="CHEBI:30616"/>
    </ligand>
</feature>
<proteinExistence type="inferred from homology"/>
<gene>
    <name evidence="1" type="primary">murD</name>
    <name type="ordered locus">CE2055</name>
</gene>
<protein>
    <recommendedName>
        <fullName evidence="1">UDP-N-acetylmuramoylalanine--D-glutamate ligase</fullName>
        <ecNumber evidence="1">6.3.2.9</ecNumber>
    </recommendedName>
    <alternativeName>
        <fullName evidence="1">D-glutamic acid-adding enzyme</fullName>
    </alternativeName>
    <alternativeName>
        <fullName evidence="1">UDP-N-acetylmuramoyl-L-alanyl-D-glutamate synthetase</fullName>
    </alternativeName>
</protein>
<reference key="1">
    <citation type="journal article" date="2003" name="Genome Res.">
        <title>Comparative complete genome sequence analysis of the amino acid replacements responsible for the thermostability of Corynebacterium efficiens.</title>
        <authorList>
            <person name="Nishio Y."/>
            <person name="Nakamura Y."/>
            <person name="Kawarabayasi Y."/>
            <person name="Usuda Y."/>
            <person name="Kimura E."/>
            <person name="Sugimoto S."/>
            <person name="Matsui K."/>
            <person name="Yamagishi A."/>
            <person name="Kikuchi H."/>
            <person name="Ikeo K."/>
            <person name="Gojobori T."/>
        </authorList>
    </citation>
    <scope>NUCLEOTIDE SEQUENCE [LARGE SCALE GENOMIC DNA]</scope>
    <source>
        <strain>DSM 44549 / YS-314 / AJ 12310 / JCM 11189 / NBRC 100395</strain>
    </source>
</reference>
<sequence>MESTTEVELSRLPDSLRGRILVTGAGVSGTGIAGMLHDLGLDVVVAEDNETSRHRLIELLDVDVVGTEHARASLGDYSIVVTSPGWRPDSPVLVDAASRGLEVIGDVELAWRLDRAGVFGVSRTWLAVTGTNGKTTTTAMLAAMMKQGGFNAVAVGNIGVPVSAALTSCDRVDVMVAELSSFQLHWAPTLVPDAGLVLNLAEDHIDWHGSFRDYALAKTRVLTAPVAVIGADDSYLVELTTELGLSGLIGFTLGEPGPRQLGVLNGHLVDNAFAAQLPLAPADGINPSGPAGVLDALAAAAVARSQGVSAEDIAGALATFEVSGHRGQVVAEDHGVQFIDNSKATNPHAADTALAGRESVIWIVGGQLKGADISELVATHAHRIKAALVLGADRAEIVTAVEQHAPDAMIRVTDSTDPVAAMRELVDHAFRFAEPGDCVLLAPAAASLDMYKGMGQRGDIFAEAVLSTIEGQKEK</sequence>
<accession>Q8FNT8</accession>